<protein>
    <recommendedName>
        <fullName evidence="1">GTPase Obg</fullName>
        <ecNumber evidence="1">3.6.5.-</ecNumber>
    </recommendedName>
    <alternativeName>
        <fullName evidence="1">GTP-binding protein Obg</fullName>
    </alternativeName>
</protein>
<sequence>MKFVDEAVIKVQAGDGGSGCVSFRREKYIPDGGPDGGDGGDGGSVYLVADASLNTLIDYRFERFYLAERGENGRGRDCTGKGGSDLTLRVPVGTRAVDIDTDEVLGDLTEVGQKLLVAKGGFHGLGNTRFKSSVNRAPRQKTLGTKGEVRELRLELLLLADVGLLGMPNAGKSTFIRAVSRATPKVADYPFTTLVPNLGVVNPRPGQSFVIADIPGLIEGAAEGAGLGIRFLKHLERCRVLLHILDIEPIDGSSPAESARAIVAELEKYSPELAAKPRWLVFNKTDLLLEEELQERVDAIVAELGWEGDVYTMSAATREGTKELAEKLFDFIKSLPDEAAAADPDKEVEFKWDNYHKAQLDDLNPDFDDSDDDDDFDDDDYDVEVIYQR</sequence>
<organism>
    <name type="scientific">Shewanella amazonensis (strain ATCC BAA-1098 / SB2B)</name>
    <dbReference type="NCBI Taxonomy" id="326297"/>
    <lineage>
        <taxon>Bacteria</taxon>
        <taxon>Pseudomonadati</taxon>
        <taxon>Pseudomonadota</taxon>
        <taxon>Gammaproteobacteria</taxon>
        <taxon>Alteromonadales</taxon>
        <taxon>Shewanellaceae</taxon>
        <taxon>Shewanella</taxon>
    </lineage>
</organism>
<accession>A1S9H3</accession>
<reference key="1">
    <citation type="submission" date="2006-12" db="EMBL/GenBank/DDBJ databases">
        <title>Complete sequence of Shewanella amazonensis SB2B.</title>
        <authorList>
            <consortium name="US DOE Joint Genome Institute"/>
            <person name="Copeland A."/>
            <person name="Lucas S."/>
            <person name="Lapidus A."/>
            <person name="Barry K."/>
            <person name="Detter J.C."/>
            <person name="Glavina del Rio T."/>
            <person name="Hammon N."/>
            <person name="Israni S."/>
            <person name="Dalin E."/>
            <person name="Tice H."/>
            <person name="Pitluck S."/>
            <person name="Munk A.C."/>
            <person name="Brettin T."/>
            <person name="Bruce D."/>
            <person name="Han C."/>
            <person name="Tapia R."/>
            <person name="Gilna P."/>
            <person name="Schmutz J."/>
            <person name="Larimer F."/>
            <person name="Land M."/>
            <person name="Hauser L."/>
            <person name="Kyrpides N."/>
            <person name="Mikhailova N."/>
            <person name="Fredrickson J."/>
            <person name="Richardson P."/>
        </authorList>
    </citation>
    <scope>NUCLEOTIDE SEQUENCE [LARGE SCALE GENOMIC DNA]</scope>
    <source>
        <strain>ATCC BAA-1098 / SB2B</strain>
    </source>
</reference>
<gene>
    <name evidence="1" type="primary">obg</name>
    <name type="ordered locus">Sama_2827</name>
</gene>
<evidence type="ECO:0000255" key="1">
    <source>
        <dbReference type="HAMAP-Rule" id="MF_01454"/>
    </source>
</evidence>
<evidence type="ECO:0000255" key="2">
    <source>
        <dbReference type="PROSITE-ProRule" id="PRU01231"/>
    </source>
</evidence>
<dbReference type="EC" id="3.6.5.-" evidence="1"/>
<dbReference type="EMBL" id="CP000507">
    <property type="protein sequence ID" value="ABM01030.1"/>
    <property type="molecule type" value="Genomic_DNA"/>
</dbReference>
<dbReference type="SMR" id="A1S9H3"/>
<dbReference type="STRING" id="326297.Sama_2827"/>
<dbReference type="KEGG" id="saz:Sama_2827"/>
<dbReference type="eggNOG" id="COG0536">
    <property type="taxonomic scope" value="Bacteria"/>
</dbReference>
<dbReference type="HOGENOM" id="CLU_011747_2_0_6"/>
<dbReference type="OrthoDB" id="9807318at2"/>
<dbReference type="Proteomes" id="UP000009175">
    <property type="component" value="Chromosome"/>
</dbReference>
<dbReference type="GO" id="GO:0005737">
    <property type="term" value="C:cytoplasm"/>
    <property type="evidence" value="ECO:0007669"/>
    <property type="project" value="UniProtKB-SubCell"/>
</dbReference>
<dbReference type="GO" id="GO:0005525">
    <property type="term" value="F:GTP binding"/>
    <property type="evidence" value="ECO:0007669"/>
    <property type="project" value="UniProtKB-UniRule"/>
</dbReference>
<dbReference type="GO" id="GO:0003924">
    <property type="term" value="F:GTPase activity"/>
    <property type="evidence" value="ECO:0007669"/>
    <property type="project" value="UniProtKB-UniRule"/>
</dbReference>
<dbReference type="GO" id="GO:0000287">
    <property type="term" value="F:magnesium ion binding"/>
    <property type="evidence" value="ECO:0007669"/>
    <property type="project" value="InterPro"/>
</dbReference>
<dbReference type="GO" id="GO:0042254">
    <property type="term" value="P:ribosome biogenesis"/>
    <property type="evidence" value="ECO:0007669"/>
    <property type="project" value="UniProtKB-UniRule"/>
</dbReference>
<dbReference type="CDD" id="cd01898">
    <property type="entry name" value="Obg"/>
    <property type="match status" value="1"/>
</dbReference>
<dbReference type="FunFam" id="2.70.210.12:FF:000001">
    <property type="entry name" value="GTPase Obg"/>
    <property type="match status" value="1"/>
</dbReference>
<dbReference type="Gene3D" id="2.70.210.12">
    <property type="entry name" value="GTP1/OBG domain"/>
    <property type="match status" value="1"/>
</dbReference>
<dbReference type="Gene3D" id="3.40.50.300">
    <property type="entry name" value="P-loop containing nucleotide triphosphate hydrolases"/>
    <property type="match status" value="1"/>
</dbReference>
<dbReference type="HAMAP" id="MF_01454">
    <property type="entry name" value="GTPase_Obg"/>
    <property type="match status" value="1"/>
</dbReference>
<dbReference type="InterPro" id="IPR031167">
    <property type="entry name" value="G_OBG"/>
</dbReference>
<dbReference type="InterPro" id="IPR006073">
    <property type="entry name" value="GTP-bd"/>
</dbReference>
<dbReference type="InterPro" id="IPR014100">
    <property type="entry name" value="GTP-bd_Obg/CgtA"/>
</dbReference>
<dbReference type="InterPro" id="IPR006074">
    <property type="entry name" value="GTP1-OBG_CS"/>
</dbReference>
<dbReference type="InterPro" id="IPR006169">
    <property type="entry name" value="GTP1_OBG_dom"/>
</dbReference>
<dbReference type="InterPro" id="IPR036726">
    <property type="entry name" value="GTP1_OBG_dom_sf"/>
</dbReference>
<dbReference type="InterPro" id="IPR045086">
    <property type="entry name" value="OBG_GTPase"/>
</dbReference>
<dbReference type="InterPro" id="IPR027417">
    <property type="entry name" value="P-loop_NTPase"/>
</dbReference>
<dbReference type="NCBIfam" id="TIGR02729">
    <property type="entry name" value="Obg_CgtA"/>
    <property type="match status" value="1"/>
</dbReference>
<dbReference type="NCBIfam" id="NF008955">
    <property type="entry name" value="PRK12297.1"/>
    <property type="match status" value="1"/>
</dbReference>
<dbReference type="NCBIfam" id="NF008956">
    <property type="entry name" value="PRK12299.1"/>
    <property type="match status" value="1"/>
</dbReference>
<dbReference type="PANTHER" id="PTHR11702">
    <property type="entry name" value="DEVELOPMENTALLY REGULATED GTP-BINDING PROTEIN-RELATED"/>
    <property type="match status" value="1"/>
</dbReference>
<dbReference type="PANTHER" id="PTHR11702:SF31">
    <property type="entry name" value="MITOCHONDRIAL RIBOSOME-ASSOCIATED GTPASE 2"/>
    <property type="match status" value="1"/>
</dbReference>
<dbReference type="Pfam" id="PF01018">
    <property type="entry name" value="GTP1_OBG"/>
    <property type="match status" value="1"/>
</dbReference>
<dbReference type="Pfam" id="PF01926">
    <property type="entry name" value="MMR_HSR1"/>
    <property type="match status" value="1"/>
</dbReference>
<dbReference type="PIRSF" id="PIRSF002401">
    <property type="entry name" value="GTP_bd_Obg/CgtA"/>
    <property type="match status" value="1"/>
</dbReference>
<dbReference type="PRINTS" id="PR00326">
    <property type="entry name" value="GTP1OBG"/>
</dbReference>
<dbReference type="SUPFAM" id="SSF82051">
    <property type="entry name" value="Obg GTP-binding protein N-terminal domain"/>
    <property type="match status" value="1"/>
</dbReference>
<dbReference type="SUPFAM" id="SSF52540">
    <property type="entry name" value="P-loop containing nucleoside triphosphate hydrolases"/>
    <property type="match status" value="1"/>
</dbReference>
<dbReference type="PROSITE" id="PS51710">
    <property type="entry name" value="G_OBG"/>
    <property type="match status" value="1"/>
</dbReference>
<dbReference type="PROSITE" id="PS00905">
    <property type="entry name" value="GTP1_OBG"/>
    <property type="match status" value="1"/>
</dbReference>
<dbReference type="PROSITE" id="PS51883">
    <property type="entry name" value="OBG"/>
    <property type="match status" value="1"/>
</dbReference>
<name>OBG_SHEAM</name>
<feature type="chain" id="PRO_0000386235" description="GTPase Obg">
    <location>
        <begin position="1"/>
        <end position="389"/>
    </location>
</feature>
<feature type="domain" description="Obg" evidence="2">
    <location>
        <begin position="1"/>
        <end position="159"/>
    </location>
</feature>
<feature type="domain" description="OBG-type G" evidence="1">
    <location>
        <begin position="160"/>
        <end position="333"/>
    </location>
</feature>
<feature type="binding site" evidence="1">
    <location>
        <begin position="166"/>
        <end position="173"/>
    </location>
    <ligand>
        <name>GTP</name>
        <dbReference type="ChEBI" id="CHEBI:37565"/>
    </ligand>
</feature>
<feature type="binding site" evidence="1">
    <location>
        <position position="173"/>
    </location>
    <ligand>
        <name>Mg(2+)</name>
        <dbReference type="ChEBI" id="CHEBI:18420"/>
    </ligand>
</feature>
<feature type="binding site" evidence="1">
    <location>
        <begin position="191"/>
        <end position="195"/>
    </location>
    <ligand>
        <name>GTP</name>
        <dbReference type="ChEBI" id="CHEBI:37565"/>
    </ligand>
</feature>
<feature type="binding site" evidence="1">
    <location>
        <position position="193"/>
    </location>
    <ligand>
        <name>Mg(2+)</name>
        <dbReference type="ChEBI" id="CHEBI:18420"/>
    </ligand>
</feature>
<feature type="binding site" evidence="1">
    <location>
        <begin position="213"/>
        <end position="216"/>
    </location>
    <ligand>
        <name>GTP</name>
        <dbReference type="ChEBI" id="CHEBI:37565"/>
    </ligand>
</feature>
<feature type="binding site" evidence="1">
    <location>
        <begin position="283"/>
        <end position="286"/>
    </location>
    <ligand>
        <name>GTP</name>
        <dbReference type="ChEBI" id="CHEBI:37565"/>
    </ligand>
</feature>
<feature type="binding site" evidence="1">
    <location>
        <begin position="314"/>
        <end position="316"/>
    </location>
    <ligand>
        <name>GTP</name>
        <dbReference type="ChEBI" id="CHEBI:37565"/>
    </ligand>
</feature>
<proteinExistence type="inferred from homology"/>
<keyword id="KW-0963">Cytoplasm</keyword>
<keyword id="KW-0342">GTP-binding</keyword>
<keyword id="KW-0378">Hydrolase</keyword>
<keyword id="KW-0460">Magnesium</keyword>
<keyword id="KW-0479">Metal-binding</keyword>
<keyword id="KW-0547">Nucleotide-binding</keyword>
<keyword id="KW-1185">Reference proteome</keyword>
<comment type="function">
    <text evidence="1">An essential GTPase which binds GTP, GDP and possibly (p)ppGpp with moderate affinity, with high nucleotide exchange rates and a fairly low GTP hydrolysis rate. Plays a role in control of the cell cycle, stress response, ribosome biogenesis and in those bacteria that undergo differentiation, in morphogenesis control.</text>
</comment>
<comment type="cofactor">
    <cofactor evidence="1">
        <name>Mg(2+)</name>
        <dbReference type="ChEBI" id="CHEBI:18420"/>
    </cofactor>
</comment>
<comment type="subunit">
    <text evidence="1">Monomer.</text>
</comment>
<comment type="subcellular location">
    <subcellularLocation>
        <location evidence="1">Cytoplasm</location>
    </subcellularLocation>
</comment>
<comment type="similarity">
    <text evidence="1">Belongs to the TRAFAC class OBG-HflX-like GTPase superfamily. OBG GTPase family.</text>
</comment>